<protein>
    <recommendedName>
        <fullName evidence="1">S-adenosylmethionine synthase</fullName>
        <shortName evidence="1">AdoMet synthase</shortName>
        <ecNumber evidence="1">2.5.1.6</ecNumber>
    </recommendedName>
    <alternativeName>
        <fullName evidence="1">MAT</fullName>
    </alternativeName>
    <alternativeName>
        <fullName evidence="1">Methionine adenosyltransferase</fullName>
    </alternativeName>
</protein>
<comment type="function">
    <text evidence="1">Catalyzes the formation of S-adenosylmethionine (AdoMet) from methionine and ATP. The overall synthetic reaction is composed of two sequential steps, AdoMet formation and the subsequent tripolyphosphate hydrolysis which occurs prior to release of AdoMet from the enzyme.</text>
</comment>
<comment type="catalytic activity">
    <reaction evidence="1">
        <text>L-methionine + ATP + H2O = S-adenosyl-L-methionine + phosphate + diphosphate</text>
        <dbReference type="Rhea" id="RHEA:21080"/>
        <dbReference type="ChEBI" id="CHEBI:15377"/>
        <dbReference type="ChEBI" id="CHEBI:30616"/>
        <dbReference type="ChEBI" id="CHEBI:33019"/>
        <dbReference type="ChEBI" id="CHEBI:43474"/>
        <dbReference type="ChEBI" id="CHEBI:57844"/>
        <dbReference type="ChEBI" id="CHEBI:59789"/>
        <dbReference type="EC" id="2.5.1.6"/>
    </reaction>
</comment>
<comment type="cofactor">
    <cofactor evidence="1">
        <name>Mg(2+)</name>
        <dbReference type="ChEBI" id="CHEBI:18420"/>
    </cofactor>
    <text evidence="1">Binds 2 divalent ions per subunit.</text>
</comment>
<comment type="cofactor">
    <cofactor evidence="1">
        <name>K(+)</name>
        <dbReference type="ChEBI" id="CHEBI:29103"/>
    </cofactor>
    <text evidence="1">Binds 1 potassium ion per subunit.</text>
</comment>
<comment type="pathway">
    <text evidence="1">Amino-acid biosynthesis; S-adenosyl-L-methionine biosynthesis; S-adenosyl-L-methionine from L-methionine: step 1/1.</text>
</comment>
<comment type="subunit">
    <text evidence="1">Homotetramer; dimer of dimers.</text>
</comment>
<comment type="subcellular location">
    <subcellularLocation>
        <location evidence="1">Cytoplasm</location>
    </subcellularLocation>
</comment>
<comment type="similarity">
    <text evidence="1">Belongs to the AdoMet synthase family.</text>
</comment>
<sequence>MKRLFTSESVTEGHPDKVADQISDAILDALIEQDPDARVAVETLVTTGLAVVAGEVTTEAYVDIQDIVRRTILDIGYTRAKYGFDGETCGVVTSIHSQSPDIALGVNKALEAKEKNDDGDEFDKIGAGDQGMMFGYATNETPEFMPLPIVLAHQLAMRLSKVRKEKIVPFLRPDGKTQVTVEYSDDGKPMRIDTILISAQHDPNVTINELKEVLLEHVIKPTIPEQYWSDNIKILVNPTGRFVLGGPSADTGLTGRKIIVDTYGGWVPHGGGAFSGKDPTKVDRSAHYMARYVAKNVVAAGLADRFMIQVAYAIGKARPVSLMIDTFSTSKVDEEKLKDVIIQLFDFRPLAIINKLNLQRPIYKKTAAYGHFGRNDPDFTWESLDAVEELKRAFNI</sequence>
<accession>A8F5B8</accession>
<gene>
    <name evidence="1" type="primary">metK</name>
    <name type="ordered locus">Tlet_0786</name>
</gene>
<feature type="chain" id="PRO_1000057565" description="S-adenosylmethionine synthase">
    <location>
        <begin position="1"/>
        <end position="396"/>
    </location>
</feature>
<feature type="region of interest" description="Flexible loop" evidence="1">
    <location>
        <begin position="98"/>
        <end position="108"/>
    </location>
</feature>
<feature type="binding site" description="in other chain" evidence="1">
    <location>
        <position position="14"/>
    </location>
    <ligand>
        <name>ATP</name>
        <dbReference type="ChEBI" id="CHEBI:30616"/>
        <note>ligand shared between two neighboring subunits</note>
    </ligand>
</feature>
<feature type="binding site" evidence="1">
    <location>
        <position position="16"/>
    </location>
    <ligand>
        <name>Mg(2+)</name>
        <dbReference type="ChEBI" id="CHEBI:18420"/>
    </ligand>
</feature>
<feature type="binding site" evidence="1">
    <location>
        <position position="42"/>
    </location>
    <ligand>
        <name>K(+)</name>
        <dbReference type="ChEBI" id="CHEBI:29103"/>
    </ligand>
</feature>
<feature type="binding site" description="in other chain" evidence="1">
    <location>
        <position position="55"/>
    </location>
    <ligand>
        <name>L-methionine</name>
        <dbReference type="ChEBI" id="CHEBI:57844"/>
        <note>ligand shared between two neighboring subunits</note>
    </ligand>
</feature>
<feature type="binding site" description="in other chain" evidence="1">
    <location>
        <position position="98"/>
    </location>
    <ligand>
        <name>L-methionine</name>
        <dbReference type="ChEBI" id="CHEBI:57844"/>
        <note>ligand shared between two neighboring subunits</note>
    </ligand>
</feature>
<feature type="binding site" description="in other chain" evidence="1">
    <location>
        <begin position="174"/>
        <end position="176"/>
    </location>
    <ligand>
        <name>ATP</name>
        <dbReference type="ChEBI" id="CHEBI:30616"/>
        <note>ligand shared between two neighboring subunits</note>
    </ligand>
</feature>
<feature type="binding site" description="in other chain" evidence="1">
    <location>
        <begin position="241"/>
        <end position="242"/>
    </location>
    <ligand>
        <name>ATP</name>
        <dbReference type="ChEBI" id="CHEBI:30616"/>
        <note>ligand shared between two neighboring subunits</note>
    </ligand>
</feature>
<feature type="binding site" evidence="1">
    <location>
        <position position="250"/>
    </location>
    <ligand>
        <name>ATP</name>
        <dbReference type="ChEBI" id="CHEBI:30616"/>
        <note>ligand shared between two neighboring subunits</note>
    </ligand>
</feature>
<feature type="binding site" evidence="1">
    <location>
        <position position="250"/>
    </location>
    <ligand>
        <name>L-methionine</name>
        <dbReference type="ChEBI" id="CHEBI:57844"/>
        <note>ligand shared between two neighboring subunits</note>
    </ligand>
</feature>
<feature type="binding site" description="in other chain" evidence="1">
    <location>
        <begin position="256"/>
        <end position="257"/>
    </location>
    <ligand>
        <name>ATP</name>
        <dbReference type="ChEBI" id="CHEBI:30616"/>
        <note>ligand shared between two neighboring subunits</note>
    </ligand>
</feature>
<feature type="binding site" evidence="1">
    <location>
        <position position="273"/>
    </location>
    <ligand>
        <name>ATP</name>
        <dbReference type="ChEBI" id="CHEBI:30616"/>
        <note>ligand shared between two neighboring subunits</note>
    </ligand>
</feature>
<feature type="binding site" evidence="1">
    <location>
        <position position="277"/>
    </location>
    <ligand>
        <name>ATP</name>
        <dbReference type="ChEBI" id="CHEBI:30616"/>
        <note>ligand shared between two neighboring subunits</note>
    </ligand>
</feature>
<feature type="binding site" description="in other chain" evidence="1">
    <location>
        <position position="281"/>
    </location>
    <ligand>
        <name>L-methionine</name>
        <dbReference type="ChEBI" id="CHEBI:57844"/>
        <note>ligand shared between two neighboring subunits</note>
    </ligand>
</feature>
<keyword id="KW-0067">ATP-binding</keyword>
<keyword id="KW-0963">Cytoplasm</keyword>
<keyword id="KW-0460">Magnesium</keyword>
<keyword id="KW-0479">Metal-binding</keyword>
<keyword id="KW-0547">Nucleotide-binding</keyword>
<keyword id="KW-0554">One-carbon metabolism</keyword>
<keyword id="KW-0630">Potassium</keyword>
<keyword id="KW-1185">Reference proteome</keyword>
<keyword id="KW-0808">Transferase</keyword>
<name>METK_PSELT</name>
<proteinExistence type="inferred from homology"/>
<evidence type="ECO:0000255" key="1">
    <source>
        <dbReference type="HAMAP-Rule" id="MF_00086"/>
    </source>
</evidence>
<dbReference type="EC" id="2.5.1.6" evidence="1"/>
<dbReference type="EMBL" id="CP000812">
    <property type="protein sequence ID" value="ABV33352.1"/>
    <property type="molecule type" value="Genomic_DNA"/>
</dbReference>
<dbReference type="RefSeq" id="WP_012002833.1">
    <property type="nucleotide sequence ID" value="NZ_BSDV01000001.1"/>
</dbReference>
<dbReference type="SMR" id="A8F5B8"/>
<dbReference type="STRING" id="416591.Tlet_0786"/>
<dbReference type="KEGG" id="tle:Tlet_0786"/>
<dbReference type="eggNOG" id="COG0192">
    <property type="taxonomic scope" value="Bacteria"/>
</dbReference>
<dbReference type="HOGENOM" id="CLU_041802_1_1_0"/>
<dbReference type="OrthoDB" id="9801686at2"/>
<dbReference type="UniPathway" id="UPA00315">
    <property type="reaction ID" value="UER00080"/>
</dbReference>
<dbReference type="Proteomes" id="UP000002016">
    <property type="component" value="Chromosome"/>
</dbReference>
<dbReference type="GO" id="GO:0005737">
    <property type="term" value="C:cytoplasm"/>
    <property type="evidence" value="ECO:0007669"/>
    <property type="project" value="UniProtKB-SubCell"/>
</dbReference>
<dbReference type="GO" id="GO:0005524">
    <property type="term" value="F:ATP binding"/>
    <property type="evidence" value="ECO:0007669"/>
    <property type="project" value="UniProtKB-UniRule"/>
</dbReference>
<dbReference type="GO" id="GO:0000287">
    <property type="term" value="F:magnesium ion binding"/>
    <property type="evidence" value="ECO:0007669"/>
    <property type="project" value="UniProtKB-UniRule"/>
</dbReference>
<dbReference type="GO" id="GO:0004478">
    <property type="term" value="F:methionine adenosyltransferase activity"/>
    <property type="evidence" value="ECO:0007669"/>
    <property type="project" value="UniProtKB-UniRule"/>
</dbReference>
<dbReference type="GO" id="GO:0006730">
    <property type="term" value="P:one-carbon metabolic process"/>
    <property type="evidence" value="ECO:0007669"/>
    <property type="project" value="UniProtKB-KW"/>
</dbReference>
<dbReference type="GO" id="GO:0006556">
    <property type="term" value="P:S-adenosylmethionine biosynthetic process"/>
    <property type="evidence" value="ECO:0007669"/>
    <property type="project" value="UniProtKB-UniRule"/>
</dbReference>
<dbReference type="CDD" id="cd18079">
    <property type="entry name" value="S-AdoMet_synt"/>
    <property type="match status" value="1"/>
</dbReference>
<dbReference type="FunFam" id="3.30.300.10:FF:000003">
    <property type="entry name" value="S-adenosylmethionine synthase"/>
    <property type="match status" value="1"/>
</dbReference>
<dbReference type="Gene3D" id="3.30.300.10">
    <property type="match status" value="3"/>
</dbReference>
<dbReference type="HAMAP" id="MF_00086">
    <property type="entry name" value="S_AdoMet_synth1"/>
    <property type="match status" value="1"/>
</dbReference>
<dbReference type="InterPro" id="IPR022631">
    <property type="entry name" value="ADOMET_SYNTHASE_CS"/>
</dbReference>
<dbReference type="InterPro" id="IPR022630">
    <property type="entry name" value="S-AdoMet_synt_C"/>
</dbReference>
<dbReference type="InterPro" id="IPR022629">
    <property type="entry name" value="S-AdoMet_synt_central"/>
</dbReference>
<dbReference type="InterPro" id="IPR022628">
    <property type="entry name" value="S-AdoMet_synt_N"/>
</dbReference>
<dbReference type="InterPro" id="IPR002133">
    <property type="entry name" value="S-AdoMet_synthetase"/>
</dbReference>
<dbReference type="InterPro" id="IPR022636">
    <property type="entry name" value="S-AdoMet_synthetase_sfam"/>
</dbReference>
<dbReference type="NCBIfam" id="TIGR01034">
    <property type="entry name" value="metK"/>
    <property type="match status" value="1"/>
</dbReference>
<dbReference type="PANTHER" id="PTHR11964">
    <property type="entry name" value="S-ADENOSYLMETHIONINE SYNTHETASE"/>
    <property type="match status" value="1"/>
</dbReference>
<dbReference type="Pfam" id="PF02773">
    <property type="entry name" value="S-AdoMet_synt_C"/>
    <property type="match status" value="1"/>
</dbReference>
<dbReference type="Pfam" id="PF02772">
    <property type="entry name" value="S-AdoMet_synt_M"/>
    <property type="match status" value="1"/>
</dbReference>
<dbReference type="Pfam" id="PF00438">
    <property type="entry name" value="S-AdoMet_synt_N"/>
    <property type="match status" value="1"/>
</dbReference>
<dbReference type="PIRSF" id="PIRSF000497">
    <property type="entry name" value="MAT"/>
    <property type="match status" value="1"/>
</dbReference>
<dbReference type="SUPFAM" id="SSF55973">
    <property type="entry name" value="S-adenosylmethionine synthetase"/>
    <property type="match status" value="3"/>
</dbReference>
<dbReference type="PROSITE" id="PS00376">
    <property type="entry name" value="ADOMET_SYNTHASE_1"/>
    <property type="match status" value="1"/>
</dbReference>
<dbReference type="PROSITE" id="PS00377">
    <property type="entry name" value="ADOMET_SYNTHASE_2"/>
    <property type="match status" value="1"/>
</dbReference>
<reference key="1">
    <citation type="submission" date="2007-08" db="EMBL/GenBank/DDBJ databases">
        <title>Complete sequence of Thermotoga lettingae TMO.</title>
        <authorList>
            <consortium name="US DOE Joint Genome Institute"/>
            <person name="Copeland A."/>
            <person name="Lucas S."/>
            <person name="Lapidus A."/>
            <person name="Barry K."/>
            <person name="Glavina del Rio T."/>
            <person name="Dalin E."/>
            <person name="Tice H."/>
            <person name="Pitluck S."/>
            <person name="Foster B."/>
            <person name="Bruce D."/>
            <person name="Schmutz J."/>
            <person name="Larimer F."/>
            <person name="Land M."/>
            <person name="Hauser L."/>
            <person name="Kyrpides N."/>
            <person name="Mikhailova N."/>
            <person name="Nelson K."/>
            <person name="Gogarten J.P."/>
            <person name="Noll K."/>
            <person name="Richardson P."/>
        </authorList>
    </citation>
    <scope>NUCLEOTIDE SEQUENCE [LARGE SCALE GENOMIC DNA]</scope>
    <source>
        <strain>ATCC BAA-301 / DSM 14385 / NBRC 107922 / TMO</strain>
    </source>
</reference>
<organism>
    <name type="scientific">Pseudothermotoga lettingae (strain ATCC BAA-301 / DSM 14385 / NBRC 107922 / TMO)</name>
    <name type="common">Thermotoga lettingae</name>
    <dbReference type="NCBI Taxonomy" id="416591"/>
    <lineage>
        <taxon>Bacteria</taxon>
        <taxon>Thermotogati</taxon>
        <taxon>Thermotogota</taxon>
        <taxon>Thermotogae</taxon>
        <taxon>Thermotogales</taxon>
        <taxon>Thermotogaceae</taxon>
        <taxon>Pseudothermotoga</taxon>
    </lineage>
</organism>